<keyword id="KW-0963">Cytoplasm</keyword>
<keyword id="KW-0342">GTP-binding</keyword>
<keyword id="KW-0378">Hydrolase</keyword>
<keyword id="KW-0547">Nucleotide-binding</keyword>
<keyword id="KW-1185">Reference proteome</keyword>
<keyword id="KW-0687">Ribonucleoprotein</keyword>
<keyword id="KW-0694">RNA-binding</keyword>
<keyword id="KW-0733">Signal recognition particle</keyword>
<dbReference type="EC" id="3.6.5.4" evidence="1"/>
<dbReference type="EMBL" id="CP001365">
    <property type="protein sequence ID" value="ACM56098.1"/>
    <property type="molecule type" value="Genomic_DNA"/>
</dbReference>
<dbReference type="RefSeq" id="WP_012659733.1">
    <property type="nucleotide sequence ID" value="NC_012029.1"/>
</dbReference>
<dbReference type="SMR" id="B9LT33"/>
<dbReference type="GeneID" id="7400377"/>
<dbReference type="KEGG" id="hla:Hlac_0496"/>
<dbReference type="eggNOG" id="arCOG01228">
    <property type="taxonomic scope" value="Archaea"/>
</dbReference>
<dbReference type="HOGENOM" id="CLU_009301_6_0_2"/>
<dbReference type="Proteomes" id="UP000000740">
    <property type="component" value="Chromosome 1"/>
</dbReference>
<dbReference type="GO" id="GO:0048500">
    <property type="term" value="C:signal recognition particle"/>
    <property type="evidence" value="ECO:0007669"/>
    <property type="project" value="UniProtKB-UniRule"/>
</dbReference>
<dbReference type="GO" id="GO:0008312">
    <property type="term" value="F:7S RNA binding"/>
    <property type="evidence" value="ECO:0007669"/>
    <property type="project" value="UniProtKB-UniRule"/>
</dbReference>
<dbReference type="GO" id="GO:0016887">
    <property type="term" value="F:ATP hydrolysis activity"/>
    <property type="evidence" value="ECO:0007669"/>
    <property type="project" value="InterPro"/>
</dbReference>
<dbReference type="GO" id="GO:0005525">
    <property type="term" value="F:GTP binding"/>
    <property type="evidence" value="ECO:0007669"/>
    <property type="project" value="UniProtKB-UniRule"/>
</dbReference>
<dbReference type="GO" id="GO:0003924">
    <property type="term" value="F:GTPase activity"/>
    <property type="evidence" value="ECO:0007669"/>
    <property type="project" value="UniProtKB-UniRule"/>
</dbReference>
<dbReference type="GO" id="GO:0006614">
    <property type="term" value="P:SRP-dependent cotranslational protein targeting to membrane"/>
    <property type="evidence" value="ECO:0007669"/>
    <property type="project" value="InterPro"/>
</dbReference>
<dbReference type="CDD" id="cd17875">
    <property type="entry name" value="SRP54_G"/>
    <property type="match status" value="1"/>
</dbReference>
<dbReference type="Gene3D" id="3.40.50.300">
    <property type="entry name" value="P-loop containing nucleotide triphosphate hydrolases"/>
    <property type="match status" value="1"/>
</dbReference>
<dbReference type="Gene3D" id="1.20.120.140">
    <property type="entry name" value="Signal recognition particle SRP54, nucleotide-binding domain"/>
    <property type="match status" value="1"/>
</dbReference>
<dbReference type="Gene3D" id="1.10.260.30">
    <property type="entry name" value="Signal recognition particle, SRP54 subunit, M-domain"/>
    <property type="match status" value="1"/>
</dbReference>
<dbReference type="HAMAP" id="MF_00306">
    <property type="entry name" value="SRP54"/>
    <property type="match status" value="1"/>
</dbReference>
<dbReference type="InterPro" id="IPR003593">
    <property type="entry name" value="AAA+_ATPase"/>
</dbReference>
<dbReference type="InterPro" id="IPR027417">
    <property type="entry name" value="P-loop_NTPase"/>
</dbReference>
<dbReference type="InterPro" id="IPR036891">
    <property type="entry name" value="Signal_recog_part_SRP54_M_sf"/>
</dbReference>
<dbReference type="InterPro" id="IPR013822">
    <property type="entry name" value="Signal_recog_particl_SRP54_hlx"/>
</dbReference>
<dbReference type="InterPro" id="IPR004125">
    <property type="entry name" value="Signal_recog_particle_SRP54_M"/>
</dbReference>
<dbReference type="InterPro" id="IPR036225">
    <property type="entry name" value="SRP/SRP_N"/>
</dbReference>
<dbReference type="InterPro" id="IPR022941">
    <property type="entry name" value="SRP54"/>
</dbReference>
<dbReference type="InterPro" id="IPR000897">
    <property type="entry name" value="SRP54_GTPase_dom"/>
</dbReference>
<dbReference type="InterPro" id="IPR042101">
    <property type="entry name" value="SRP54_N_sf"/>
</dbReference>
<dbReference type="PANTHER" id="PTHR11564">
    <property type="entry name" value="SIGNAL RECOGNITION PARTICLE 54K PROTEIN SRP54"/>
    <property type="match status" value="1"/>
</dbReference>
<dbReference type="PANTHER" id="PTHR11564:SF5">
    <property type="entry name" value="SIGNAL RECOGNITION PARTICLE SUBUNIT SRP54"/>
    <property type="match status" value="1"/>
</dbReference>
<dbReference type="Pfam" id="PF00448">
    <property type="entry name" value="SRP54"/>
    <property type="match status" value="1"/>
</dbReference>
<dbReference type="Pfam" id="PF02881">
    <property type="entry name" value="SRP54_N"/>
    <property type="match status" value="1"/>
</dbReference>
<dbReference type="Pfam" id="PF02978">
    <property type="entry name" value="SRP_SPB"/>
    <property type="match status" value="1"/>
</dbReference>
<dbReference type="SMART" id="SM00382">
    <property type="entry name" value="AAA"/>
    <property type="match status" value="1"/>
</dbReference>
<dbReference type="SMART" id="SM00962">
    <property type="entry name" value="SRP54"/>
    <property type="match status" value="1"/>
</dbReference>
<dbReference type="SMART" id="SM00963">
    <property type="entry name" value="SRP54_N"/>
    <property type="match status" value="1"/>
</dbReference>
<dbReference type="SUPFAM" id="SSF47364">
    <property type="entry name" value="Domain of the SRP/SRP receptor G-proteins"/>
    <property type="match status" value="1"/>
</dbReference>
<dbReference type="SUPFAM" id="SSF52540">
    <property type="entry name" value="P-loop containing nucleoside triphosphate hydrolases"/>
    <property type="match status" value="1"/>
</dbReference>
<dbReference type="SUPFAM" id="SSF47446">
    <property type="entry name" value="Signal peptide-binding domain"/>
    <property type="match status" value="1"/>
</dbReference>
<comment type="function">
    <text evidence="1">Involved in targeting and insertion of nascent membrane proteins into the cytoplasmic membrane. Binds to the hydrophobic signal sequence of the ribosome-nascent chain (RNC) as it emerges from the ribosomes. The SRP-RNC complex is then targeted to the cytoplasmic membrane where it interacts with the SRP receptor FtsY.</text>
</comment>
<comment type="catalytic activity">
    <reaction evidence="1">
        <text>GTP + H2O = GDP + phosphate + H(+)</text>
        <dbReference type="Rhea" id="RHEA:19669"/>
        <dbReference type="ChEBI" id="CHEBI:15377"/>
        <dbReference type="ChEBI" id="CHEBI:15378"/>
        <dbReference type="ChEBI" id="CHEBI:37565"/>
        <dbReference type="ChEBI" id="CHEBI:43474"/>
        <dbReference type="ChEBI" id="CHEBI:58189"/>
        <dbReference type="EC" id="3.6.5.4"/>
    </reaction>
</comment>
<comment type="subunit">
    <text evidence="1">Part of the signal recognition particle protein translocation system, which is composed of SRP and FtsY. Archaeal SRP consists of a 7S RNA molecule of 300 nucleotides and two protein subunits: SRP54 and SRP19.</text>
</comment>
<comment type="subcellular location">
    <subcellularLocation>
        <location evidence="1">Cytoplasm</location>
    </subcellularLocation>
    <text evidence="1">The SRP-RNC complex is targeted to the cytoplasmic membrane.</text>
</comment>
<comment type="domain">
    <text evidence="1">Composed of three domains: the N-terminal N domain, which is responsible for interactions with the ribosome, the central G domain, which binds GTP, and the C-terminal M domain, which binds the RNA and the signal sequence of the RNC.</text>
</comment>
<comment type="similarity">
    <text evidence="1">Belongs to the GTP-binding SRP family. SRP54 subfamily.</text>
</comment>
<accession>B9LT33</accession>
<proteinExistence type="inferred from homology"/>
<feature type="chain" id="PRO_1000197504" description="Signal recognition particle 54 kDa protein">
    <location>
        <begin position="1"/>
        <end position="464"/>
    </location>
</feature>
<feature type="binding site" evidence="1">
    <location>
        <begin position="104"/>
        <end position="111"/>
    </location>
    <ligand>
        <name>GTP</name>
        <dbReference type="ChEBI" id="CHEBI:37565"/>
    </ligand>
</feature>
<feature type="binding site" evidence="1">
    <location>
        <begin position="184"/>
        <end position="188"/>
    </location>
    <ligand>
        <name>GTP</name>
        <dbReference type="ChEBI" id="CHEBI:37565"/>
    </ligand>
</feature>
<feature type="binding site" evidence="1">
    <location>
        <begin position="242"/>
        <end position="245"/>
    </location>
    <ligand>
        <name>GTP</name>
        <dbReference type="ChEBI" id="CHEBI:37565"/>
    </ligand>
</feature>
<name>SRP54_HALLT</name>
<reference key="1">
    <citation type="journal article" date="2016" name="Stand. Genomic Sci.">
        <title>Complete genome sequence of the Antarctic Halorubrum lacusprofundi type strain ACAM 34.</title>
        <authorList>
            <person name="Anderson I.J."/>
            <person name="DasSarma P."/>
            <person name="Lucas S."/>
            <person name="Copeland A."/>
            <person name="Lapidus A."/>
            <person name="Del Rio T.G."/>
            <person name="Tice H."/>
            <person name="Dalin E."/>
            <person name="Bruce D.C."/>
            <person name="Goodwin L."/>
            <person name="Pitluck S."/>
            <person name="Sims D."/>
            <person name="Brettin T.S."/>
            <person name="Detter J.C."/>
            <person name="Han C.S."/>
            <person name="Larimer F."/>
            <person name="Hauser L."/>
            <person name="Land M."/>
            <person name="Ivanova N."/>
            <person name="Richardson P."/>
            <person name="Cavicchioli R."/>
            <person name="DasSarma S."/>
            <person name="Woese C.R."/>
            <person name="Kyrpides N.C."/>
        </authorList>
    </citation>
    <scope>NUCLEOTIDE SEQUENCE [LARGE SCALE GENOMIC DNA]</scope>
    <source>
        <strain>ATCC 49239 / DSM 5036 / JCM 8891 / ACAM 34</strain>
    </source>
</reference>
<protein>
    <recommendedName>
        <fullName evidence="1">Signal recognition particle 54 kDa protein</fullName>
        <shortName evidence="1">SRP54</shortName>
        <ecNumber evidence="1">3.6.5.4</ecNumber>
    </recommendedName>
</protein>
<gene>
    <name evidence="1" type="primary">srp54</name>
    <name type="ordered locus">Hlac_0496</name>
</gene>
<sequence length="464" mass="50889">MVLDDLGTSLRSSLDKLQGKSRLSESDVEEIVKEIQRSLLSADVDVSLVMELSDSIKTRALEEEPPGGTTAKDHVLKIVYEEMVELVGDSTELPLENQTILLAGLQGSGKTTSAAKMAWWFSKKGLRPAVIQTDTFRPGAYDQAKQMCERAEVDFYGDPDNDDPVAIAREGLEATADADVHIVDTAGRHALEDDLIAEIEEIERAVDPDRSLLVLDAAIGQGAKEQARQFEKSIGIEGVMITKLDGTAKGGGALTAVNETDSSIAFLGTGETVQDIERFEPSGFISRLLGMGDLKQLSERVERAMAEAQEEDEDWDPEDMLQGEFTLKDMKRQMDAMNRMGPLDQVMDMIPGMGGGMMDQLPDDAMDVTQDRMRRFERIMDSMTDEELEQPRVVGQSRTERIARGSGTDEETVRQLLEQHSMMEQTISQFQGMGEGDMQRMMKKMGGGEGGGLGDMMGGGKGPF</sequence>
<evidence type="ECO:0000255" key="1">
    <source>
        <dbReference type="HAMAP-Rule" id="MF_00306"/>
    </source>
</evidence>
<organism>
    <name type="scientific">Halorubrum lacusprofundi (strain ATCC 49239 / DSM 5036 / JCM 8891 / ACAM 34)</name>
    <dbReference type="NCBI Taxonomy" id="416348"/>
    <lineage>
        <taxon>Archaea</taxon>
        <taxon>Methanobacteriati</taxon>
        <taxon>Methanobacteriota</taxon>
        <taxon>Stenosarchaea group</taxon>
        <taxon>Halobacteria</taxon>
        <taxon>Halobacteriales</taxon>
        <taxon>Haloferacaceae</taxon>
        <taxon>Halorubrum</taxon>
    </lineage>
</organism>